<proteinExistence type="inferred from homology"/>
<comment type="function">
    <text evidence="1">Catalyzes the formation of phosphodiester linkages between 5'-phosphoryl and 3'-hydroxyl groups in double-stranded DNA using NAD as a coenzyme and as the energy source for the reaction.</text>
</comment>
<comment type="catalytic activity">
    <reaction evidence="1">
        <text>NAD(+) + (deoxyribonucleotide)n-3'-hydroxyl + 5'-phospho-(deoxyribonucleotide)m = (deoxyribonucleotide)n+m + AMP + beta-nicotinamide D-nucleotide.</text>
        <dbReference type="EC" id="6.5.1.2"/>
    </reaction>
</comment>
<comment type="similarity">
    <text evidence="1">Belongs to the NAD-dependent DNA ligase family. LigB subfamily.</text>
</comment>
<organism>
    <name type="scientific">Yersinia pestis</name>
    <dbReference type="NCBI Taxonomy" id="632"/>
    <lineage>
        <taxon>Bacteria</taxon>
        <taxon>Pseudomonadati</taxon>
        <taxon>Pseudomonadota</taxon>
        <taxon>Gammaproteobacteria</taxon>
        <taxon>Enterobacterales</taxon>
        <taxon>Yersiniaceae</taxon>
        <taxon>Yersinia</taxon>
    </lineage>
</organism>
<gene>
    <name evidence="1" type="primary">ligB</name>
    <name type="ordered locus">YPO0041</name>
    <name type="ordered locus">y0100</name>
    <name type="ordered locus">YP_0042</name>
</gene>
<accession>Q7CLB2</accession>
<accession>Q74YB0</accession>
<sequence>MNILNLKIIMFLLISNTIVVGGAWATSTCPDWPATRIAVEINALEQQLNKWSAAYHQQGHSPVTDDIYDQLQDKLRVWQSCRGLPDKTESQPIPGKGQFLHPVAHTGLKKLKDETALTRWMAGRKNLWVQPKVDGVAVTLVYHGGKLVQLLSRGNGVKGQNWTEKAPFISAIPQYIANAPALLTLQGELFLLMDGHQQAKSGGVNARSTVAGALMRKSPSPLLAQVGVFIWAWPDGPTTMKEKVALLQVMGFPFTAKYSEPVMSHLDVVQWRQFWFQAPLPFVTDGVVVRQEEEPAGRYWQATPGQWSMAWKYPPLQHIAEVKDIHFTLGRTGKGTVVLEVLPIKIDDKWIRRVNIGSVTRWKQWDIAPGDHITLALAGHGIPRLDNVVWRVHQRNTITAPNWDKFHQLSCFQRLPHGCEPQFLSRLIWLSGPGGLDIGGIGGGFWQELIHHELINDLVGWLLLTPEQIASIPGIGNARAEKIYQQFQRAKQQPFSRWLLALGFPQVVSVDAQWQVVLRRSLSEWATMAGIGQMRAKQIKHFLDHPDVQALADFLSTQKVVGFELTE</sequence>
<keyword id="KW-0227">DNA damage</keyword>
<keyword id="KW-0234">DNA repair</keyword>
<keyword id="KW-0235">DNA replication</keyword>
<keyword id="KW-0436">Ligase</keyword>
<keyword id="KW-0520">NAD</keyword>
<keyword id="KW-1185">Reference proteome</keyword>
<protein>
    <recommendedName>
        <fullName evidence="1">DNA ligase B</fullName>
        <ecNumber evidence="1">6.5.1.2</ecNumber>
    </recommendedName>
    <alternativeName>
        <fullName evidence="1">Polydeoxyribonucleotide synthase [NAD(+)] B</fullName>
    </alternativeName>
</protein>
<name>LIGB_YERPE</name>
<feature type="chain" id="PRO_0000313558" description="DNA ligase B">
    <location>
        <begin position="1"/>
        <end position="567"/>
    </location>
</feature>
<feature type="active site" description="N6-AMP-lysine intermediate" evidence="1">
    <location>
        <position position="132"/>
    </location>
</feature>
<dbReference type="EC" id="6.5.1.2" evidence="1"/>
<dbReference type="EMBL" id="AL590842">
    <property type="protein sequence ID" value="CAL18731.1"/>
    <property type="molecule type" value="Genomic_DNA"/>
</dbReference>
<dbReference type="EMBL" id="AE009952">
    <property type="protein sequence ID" value="AAM83694.1"/>
    <property type="molecule type" value="Genomic_DNA"/>
</dbReference>
<dbReference type="EMBL" id="AE017042">
    <property type="protein sequence ID" value="AAS60323.1"/>
    <property type="molecule type" value="Genomic_DNA"/>
</dbReference>
<dbReference type="PIR" id="AB0006">
    <property type="entry name" value="AB0006"/>
</dbReference>
<dbReference type="RefSeq" id="WP_002215674.1">
    <property type="nucleotide sequence ID" value="NZ_WUCM01000015.1"/>
</dbReference>
<dbReference type="RefSeq" id="YP_002345137.1">
    <property type="nucleotide sequence ID" value="NC_003143.1"/>
</dbReference>
<dbReference type="SMR" id="Q7CLB2"/>
<dbReference type="IntAct" id="Q7CLB2">
    <property type="interactions" value="2"/>
</dbReference>
<dbReference type="STRING" id="214092.YPO0041"/>
<dbReference type="PaxDb" id="214092-YPO0041"/>
<dbReference type="DNASU" id="1145047"/>
<dbReference type="EnsemblBacteria" id="AAS60323">
    <property type="protein sequence ID" value="AAS60323"/>
    <property type="gene ID" value="YP_0042"/>
</dbReference>
<dbReference type="GeneID" id="57974549"/>
<dbReference type="KEGG" id="ype:YPO0041"/>
<dbReference type="KEGG" id="ypk:y0100"/>
<dbReference type="KEGG" id="ypm:YP_0042"/>
<dbReference type="PATRIC" id="fig|214092.21.peg.264"/>
<dbReference type="eggNOG" id="COG0272">
    <property type="taxonomic scope" value="Bacteria"/>
</dbReference>
<dbReference type="HOGENOM" id="CLU_489786_0_0_6"/>
<dbReference type="OMA" id="DLWIQPK"/>
<dbReference type="OrthoDB" id="9759736at2"/>
<dbReference type="Proteomes" id="UP000000815">
    <property type="component" value="Chromosome"/>
</dbReference>
<dbReference type="Proteomes" id="UP000001019">
    <property type="component" value="Chromosome"/>
</dbReference>
<dbReference type="Proteomes" id="UP000002490">
    <property type="component" value="Chromosome"/>
</dbReference>
<dbReference type="GO" id="GO:0003911">
    <property type="term" value="F:DNA ligase (NAD+) activity"/>
    <property type="evidence" value="ECO:0000318"/>
    <property type="project" value="GO_Central"/>
</dbReference>
<dbReference type="GO" id="GO:0006281">
    <property type="term" value="P:DNA repair"/>
    <property type="evidence" value="ECO:0007669"/>
    <property type="project" value="UniProtKB-KW"/>
</dbReference>
<dbReference type="GO" id="GO:0006260">
    <property type="term" value="P:DNA replication"/>
    <property type="evidence" value="ECO:0007669"/>
    <property type="project" value="UniProtKB-KW"/>
</dbReference>
<dbReference type="CDD" id="cd00114">
    <property type="entry name" value="LIGANc"/>
    <property type="match status" value="1"/>
</dbReference>
<dbReference type="FunFam" id="2.40.50.140:FF:000139">
    <property type="entry name" value="DNA ligase B"/>
    <property type="match status" value="1"/>
</dbReference>
<dbReference type="FunFam" id="3.30.470.30:FF:000007">
    <property type="entry name" value="DNA ligase B"/>
    <property type="match status" value="1"/>
</dbReference>
<dbReference type="Gene3D" id="1.10.150.20">
    <property type="entry name" value="5' to 3' exonuclease, C-terminal subdomain"/>
    <property type="match status" value="1"/>
</dbReference>
<dbReference type="Gene3D" id="3.30.470.30">
    <property type="entry name" value="DNA ligase/mRNA capping enzyme"/>
    <property type="match status" value="1"/>
</dbReference>
<dbReference type="Gene3D" id="1.10.287.610">
    <property type="entry name" value="Helix hairpin bin"/>
    <property type="match status" value="1"/>
</dbReference>
<dbReference type="Gene3D" id="2.40.50.140">
    <property type="entry name" value="Nucleic acid-binding proteins"/>
    <property type="match status" value="1"/>
</dbReference>
<dbReference type="HAMAP" id="MF_01587">
    <property type="entry name" value="DNA_ligase_B"/>
    <property type="match status" value="1"/>
</dbReference>
<dbReference type="InterPro" id="IPR020923">
    <property type="entry name" value="DNA_ligase_B"/>
</dbReference>
<dbReference type="InterPro" id="IPR013839">
    <property type="entry name" value="DNAligase_adenylation"/>
</dbReference>
<dbReference type="InterPro" id="IPR013840">
    <property type="entry name" value="DNAligase_N"/>
</dbReference>
<dbReference type="InterPro" id="IPR012340">
    <property type="entry name" value="NA-bd_OB-fold"/>
</dbReference>
<dbReference type="InterPro" id="IPR050326">
    <property type="entry name" value="NAD_dep_DNA_ligaseB"/>
</dbReference>
<dbReference type="InterPro" id="IPR004150">
    <property type="entry name" value="NAD_DNA_ligase_OB"/>
</dbReference>
<dbReference type="InterPro" id="IPR010994">
    <property type="entry name" value="RuvA_2-like"/>
</dbReference>
<dbReference type="NCBIfam" id="NF005987">
    <property type="entry name" value="PRK08097.1"/>
    <property type="match status" value="1"/>
</dbReference>
<dbReference type="PANTHER" id="PTHR47810">
    <property type="entry name" value="DNA LIGASE"/>
    <property type="match status" value="1"/>
</dbReference>
<dbReference type="PANTHER" id="PTHR47810:SF1">
    <property type="entry name" value="DNA LIGASE B"/>
    <property type="match status" value="1"/>
</dbReference>
<dbReference type="Pfam" id="PF01653">
    <property type="entry name" value="DNA_ligase_aden"/>
    <property type="match status" value="1"/>
</dbReference>
<dbReference type="Pfam" id="PF03120">
    <property type="entry name" value="DNA_ligase_OB"/>
    <property type="match status" value="1"/>
</dbReference>
<dbReference type="SMART" id="SM00532">
    <property type="entry name" value="LIGANc"/>
    <property type="match status" value="1"/>
</dbReference>
<dbReference type="SUPFAM" id="SSF56091">
    <property type="entry name" value="DNA ligase/mRNA capping enzyme, catalytic domain"/>
    <property type="match status" value="1"/>
</dbReference>
<dbReference type="SUPFAM" id="SSF50249">
    <property type="entry name" value="Nucleic acid-binding proteins"/>
    <property type="match status" value="1"/>
</dbReference>
<dbReference type="SUPFAM" id="SSF47781">
    <property type="entry name" value="RuvA domain 2-like"/>
    <property type="match status" value="1"/>
</dbReference>
<reference key="1">
    <citation type="journal article" date="2001" name="Nature">
        <title>Genome sequence of Yersinia pestis, the causative agent of plague.</title>
        <authorList>
            <person name="Parkhill J."/>
            <person name="Wren B.W."/>
            <person name="Thomson N.R."/>
            <person name="Titball R.W."/>
            <person name="Holden M.T.G."/>
            <person name="Prentice M.B."/>
            <person name="Sebaihia M."/>
            <person name="James K.D."/>
            <person name="Churcher C.M."/>
            <person name="Mungall K.L."/>
            <person name="Baker S."/>
            <person name="Basham D."/>
            <person name="Bentley S.D."/>
            <person name="Brooks K."/>
            <person name="Cerdeno-Tarraga A.-M."/>
            <person name="Chillingworth T."/>
            <person name="Cronin A."/>
            <person name="Davies R.M."/>
            <person name="Davis P."/>
            <person name="Dougan G."/>
            <person name="Feltwell T."/>
            <person name="Hamlin N."/>
            <person name="Holroyd S."/>
            <person name="Jagels K."/>
            <person name="Karlyshev A.V."/>
            <person name="Leather S."/>
            <person name="Moule S."/>
            <person name="Oyston P.C.F."/>
            <person name="Quail M.A."/>
            <person name="Rutherford K.M."/>
            <person name="Simmonds M."/>
            <person name="Skelton J."/>
            <person name="Stevens K."/>
            <person name="Whitehead S."/>
            <person name="Barrell B.G."/>
        </authorList>
    </citation>
    <scope>NUCLEOTIDE SEQUENCE [LARGE SCALE GENOMIC DNA]</scope>
    <source>
        <strain>CO-92 / Biovar Orientalis</strain>
    </source>
</reference>
<reference key="2">
    <citation type="journal article" date="2002" name="J. Bacteriol.">
        <title>Genome sequence of Yersinia pestis KIM.</title>
        <authorList>
            <person name="Deng W."/>
            <person name="Burland V."/>
            <person name="Plunkett G. III"/>
            <person name="Boutin A."/>
            <person name="Mayhew G.F."/>
            <person name="Liss P."/>
            <person name="Perna N.T."/>
            <person name="Rose D.J."/>
            <person name="Mau B."/>
            <person name="Zhou S."/>
            <person name="Schwartz D.C."/>
            <person name="Fetherston J.D."/>
            <person name="Lindler L.E."/>
            <person name="Brubaker R.R."/>
            <person name="Plano G.V."/>
            <person name="Straley S.C."/>
            <person name="McDonough K.A."/>
            <person name="Nilles M.L."/>
            <person name="Matson J.S."/>
            <person name="Blattner F.R."/>
            <person name="Perry R.D."/>
        </authorList>
    </citation>
    <scope>NUCLEOTIDE SEQUENCE [LARGE SCALE GENOMIC DNA]</scope>
    <source>
        <strain>KIM10+ / Biovar Mediaevalis</strain>
    </source>
</reference>
<reference key="3">
    <citation type="journal article" date="2004" name="DNA Res.">
        <title>Complete genome sequence of Yersinia pestis strain 91001, an isolate avirulent to humans.</title>
        <authorList>
            <person name="Song Y."/>
            <person name="Tong Z."/>
            <person name="Wang J."/>
            <person name="Wang L."/>
            <person name="Guo Z."/>
            <person name="Han Y."/>
            <person name="Zhang J."/>
            <person name="Pei D."/>
            <person name="Zhou D."/>
            <person name="Qin H."/>
            <person name="Pang X."/>
            <person name="Han Y."/>
            <person name="Zhai J."/>
            <person name="Li M."/>
            <person name="Cui B."/>
            <person name="Qi Z."/>
            <person name="Jin L."/>
            <person name="Dai R."/>
            <person name="Chen F."/>
            <person name="Li S."/>
            <person name="Ye C."/>
            <person name="Du Z."/>
            <person name="Lin W."/>
            <person name="Wang J."/>
            <person name="Yu J."/>
            <person name="Yang H."/>
            <person name="Wang J."/>
            <person name="Huang P."/>
            <person name="Yang R."/>
        </authorList>
    </citation>
    <scope>NUCLEOTIDE SEQUENCE [LARGE SCALE GENOMIC DNA]</scope>
    <source>
        <strain>91001 / Biovar Mediaevalis</strain>
    </source>
</reference>
<evidence type="ECO:0000255" key="1">
    <source>
        <dbReference type="HAMAP-Rule" id="MF_01587"/>
    </source>
</evidence>